<proteinExistence type="inferred from homology"/>
<keyword id="KW-0489">Methyltransferase</keyword>
<keyword id="KW-1185">Reference proteome</keyword>
<keyword id="KW-0949">S-adenosyl-L-methionine</keyword>
<keyword id="KW-0808">Transferase</keyword>
<keyword id="KW-0831">Ubiquinone biosynthesis</keyword>
<sequence>MTNADPHELQKFSDLAHRWWDPNAEFKPLHDLNPVRLAWIDSHAHLAGKRALDVGCGGGILSESMAGLGAQVKGIDLSTEALGVADLHSLESGITVDYEAIAAEAIAAREPGTYDVVTCMEMLEHVPSPADIVAACATLVKPGGWVFFSTLNRNLKSYLFAVIGAEYIAQMLPKGTHDYARFIRPSELAGFVRATDLHIVEIKGITYHPLGKRFALSNDTDINYLVACRRAA</sequence>
<evidence type="ECO:0000255" key="1">
    <source>
        <dbReference type="HAMAP-Rule" id="MF_00472"/>
    </source>
</evidence>
<name>UBIG_BURM1</name>
<comment type="function">
    <text evidence="1">O-methyltransferase that catalyzes the 2 O-methylation steps in the ubiquinone biosynthetic pathway.</text>
</comment>
<comment type="catalytic activity">
    <reaction evidence="1">
        <text>a 3-demethylubiquinol + S-adenosyl-L-methionine = a ubiquinol + S-adenosyl-L-homocysteine + H(+)</text>
        <dbReference type="Rhea" id="RHEA:44380"/>
        <dbReference type="Rhea" id="RHEA-COMP:9566"/>
        <dbReference type="Rhea" id="RHEA-COMP:10914"/>
        <dbReference type="ChEBI" id="CHEBI:15378"/>
        <dbReference type="ChEBI" id="CHEBI:17976"/>
        <dbReference type="ChEBI" id="CHEBI:57856"/>
        <dbReference type="ChEBI" id="CHEBI:59789"/>
        <dbReference type="ChEBI" id="CHEBI:84422"/>
        <dbReference type="EC" id="2.1.1.64"/>
    </reaction>
</comment>
<comment type="catalytic activity">
    <reaction evidence="1">
        <text>a 3-(all-trans-polyprenyl)benzene-1,2-diol + S-adenosyl-L-methionine = a 2-methoxy-6-(all-trans-polyprenyl)phenol + S-adenosyl-L-homocysteine + H(+)</text>
        <dbReference type="Rhea" id="RHEA:31411"/>
        <dbReference type="Rhea" id="RHEA-COMP:9550"/>
        <dbReference type="Rhea" id="RHEA-COMP:9551"/>
        <dbReference type="ChEBI" id="CHEBI:15378"/>
        <dbReference type="ChEBI" id="CHEBI:57856"/>
        <dbReference type="ChEBI" id="CHEBI:59789"/>
        <dbReference type="ChEBI" id="CHEBI:62729"/>
        <dbReference type="ChEBI" id="CHEBI:62731"/>
        <dbReference type="EC" id="2.1.1.222"/>
    </reaction>
</comment>
<comment type="pathway">
    <text evidence="1">Cofactor biosynthesis; ubiquinone biosynthesis.</text>
</comment>
<comment type="similarity">
    <text evidence="1">Belongs to the methyltransferase superfamily. UbiG/COQ3 family.</text>
</comment>
<protein>
    <recommendedName>
        <fullName evidence="1">Ubiquinone biosynthesis O-methyltransferase</fullName>
    </recommendedName>
    <alternativeName>
        <fullName evidence="1">2-polyprenyl-6-hydroxyphenol methylase</fullName>
        <ecNumber evidence="1">2.1.1.222</ecNumber>
    </alternativeName>
    <alternativeName>
        <fullName evidence="1">3-demethylubiquinone 3-O-methyltransferase</fullName>
        <ecNumber evidence="1">2.1.1.64</ecNumber>
    </alternativeName>
</protein>
<reference key="1">
    <citation type="submission" date="2007-10" db="EMBL/GenBank/DDBJ databases">
        <title>Complete sequence of chromosome 1 of Burkholderia multivorans ATCC 17616.</title>
        <authorList>
            <person name="Copeland A."/>
            <person name="Lucas S."/>
            <person name="Lapidus A."/>
            <person name="Barry K."/>
            <person name="Glavina del Rio T."/>
            <person name="Dalin E."/>
            <person name="Tice H."/>
            <person name="Pitluck S."/>
            <person name="Chain P."/>
            <person name="Malfatti S."/>
            <person name="Shin M."/>
            <person name="Vergez L."/>
            <person name="Schmutz J."/>
            <person name="Larimer F."/>
            <person name="Land M."/>
            <person name="Hauser L."/>
            <person name="Kyrpides N."/>
            <person name="Kim E."/>
            <person name="Tiedje J."/>
            <person name="Richardson P."/>
        </authorList>
    </citation>
    <scope>NUCLEOTIDE SEQUENCE [LARGE SCALE GENOMIC DNA]</scope>
    <source>
        <strain>ATCC 17616 / 249</strain>
    </source>
</reference>
<reference key="2">
    <citation type="submission" date="2007-04" db="EMBL/GenBank/DDBJ databases">
        <title>Complete genome sequence of Burkholderia multivorans ATCC 17616.</title>
        <authorList>
            <person name="Ohtsubo Y."/>
            <person name="Yamashita A."/>
            <person name="Kurokawa K."/>
            <person name="Takami H."/>
            <person name="Yuhara S."/>
            <person name="Nishiyama E."/>
            <person name="Endo R."/>
            <person name="Miyazaki R."/>
            <person name="Ono A."/>
            <person name="Yano K."/>
            <person name="Ito M."/>
            <person name="Sota M."/>
            <person name="Yuji N."/>
            <person name="Hattori M."/>
            <person name="Tsuda M."/>
        </authorList>
    </citation>
    <scope>NUCLEOTIDE SEQUENCE [LARGE SCALE GENOMIC DNA]</scope>
    <source>
        <strain>ATCC 17616 / 249</strain>
    </source>
</reference>
<accession>A9ADW3</accession>
<organism>
    <name type="scientific">Burkholderia multivorans (strain ATCC 17616 / 249)</name>
    <dbReference type="NCBI Taxonomy" id="395019"/>
    <lineage>
        <taxon>Bacteria</taxon>
        <taxon>Pseudomonadati</taxon>
        <taxon>Pseudomonadota</taxon>
        <taxon>Betaproteobacteria</taxon>
        <taxon>Burkholderiales</taxon>
        <taxon>Burkholderiaceae</taxon>
        <taxon>Burkholderia</taxon>
        <taxon>Burkholderia cepacia complex</taxon>
    </lineage>
</organism>
<feature type="chain" id="PRO_1000199672" description="Ubiquinone biosynthesis O-methyltransferase">
    <location>
        <begin position="1"/>
        <end position="232"/>
    </location>
</feature>
<feature type="binding site" evidence="1">
    <location>
        <position position="36"/>
    </location>
    <ligand>
        <name>S-adenosyl-L-methionine</name>
        <dbReference type="ChEBI" id="CHEBI:59789"/>
    </ligand>
</feature>
<feature type="binding site" evidence="1">
    <location>
        <position position="55"/>
    </location>
    <ligand>
        <name>S-adenosyl-L-methionine</name>
        <dbReference type="ChEBI" id="CHEBI:59789"/>
    </ligand>
</feature>
<feature type="binding site" evidence="1">
    <location>
        <position position="76"/>
    </location>
    <ligand>
        <name>S-adenosyl-L-methionine</name>
        <dbReference type="ChEBI" id="CHEBI:59789"/>
    </ligand>
</feature>
<feature type="binding site" evidence="1">
    <location>
        <position position="120"/>
    </location>
    <ligand>
        <name>S-adenosyl-L-methionine</name>
        <dbReference type="ChEBI" id="CHEBI:59789"/>
    </ligand>
</feature>
<gene>
    <name evidence="1" type="primary">ubiG</name>
    <name type="ordered locus">Bmul_2266</name>
    <name type="ordered locus">BMULJ_00972</name>
</gene>
<dbReference type="EC" id="2.1.1.222" evidence="1"/>
<dbReference type="EC" id="2.1.1.64" evidence="1"/>
<dbReference type="EMBL" id="CP000868">
    <property type="protein sequence ID" value="ABX15951.1"/>
    <property type="molecule type" value="Genomic_DNA"/>
</dbReference>
<dbReference type="EMBL" id="AP009385">
    <property type="protein sequence ID" value="BAG42918.1"/>
    <property type="molecule type" value="Genomic_DNA"/>
</dbReference>
<dbReference type="RefSeq" id="WP_006400737.1">
    <property type="nucleotide sequence ID" value="NC_010804.1"/>
</dbReference>
<dbReference type="SMR" id="A9ADW3"/>
<dbReference type="STRING" id="395019.BMULJ_00972"/>
<dbReference type="GeneID" id="89569334"/>
<dbReference type="KEGG" id="bmj:BMULJ_00972"/>
<dbReference type="KEGG" id="bmu:Bmul_2266"/>
<dbReference type="eggNOG" id="COG2227">
    <property type="taxonomic scope" value="Bacteria"/>
</dbReference>
<dbReference type="HOGENOM" id="CLU_042432_5_0_4"/>
<dbReference type="UniPathway" id="UPA00232"/>
<dbReference type="Proteomes" id="UP000008815">
    <property type="component" value="Chromosome 1"/>
</dbReference>
<dbReference type="GO" id="GO:0102208">
    <property type="term" value="F:2-polyprenyl-6-hydroxyphenol methylase activity"/>
    <property type="evidence" value="ECO:0007669"/>
    <property type="project" value="UniProtKB-EC"/>
</dbReference>
<dbReference type="GO" id="GO:0061542">
    <property type="term" value="F:3-demethylubiquinol 3-O-methyltransferase activity"/>
    <property type="evidence" value="ECO:0007669"/>
    <property type="project" value="UniProtKB-UniRule"/>
</dbReference>
<dbReference type="GO" id="GO:0010420">
    <property type="term" value="F:polyprenyldihydroxybenzoate methyltransferase activity"/>
    <property type="evidence" value="ECO:0007669"/>
    <property type="project" value="InterPro"/>
</dbReference>
<dbReference type="GO" id="GO:0032259">
    <property type="term" value="P:methylation"/>
    <property type="evidence" value="ECO:0007669"/>
    <property type="project" value="UniProtKB-KW"/>
</dbReference>
<dbReference type="CDD" id="cd02440">
    <property type="entry name" value="AdoMet_MTases"/>
    <property type="match status" value="1"/>
</dbReference>
<dbReference type="FunFam" id="3.40.50.150:FF:000028">
    <property type="entry name" value="Ubiquinone biosynthesis O-methyltransferase"/>
    <property type="match status" value="1"/>
</dbReference>
<dbReference type="Gene3D" id="3.40.50.150">
    <property type="entry name" value="Vaccinia Virus protein VP39"/>
    <property type="match status" value="1"/>
</dbReference>
<dbReference type="HAMAP" id="MF_00472">
    <property type="entry name" value="UbiG"/>
    <property type="match status" value="1"/>
</dbReference>
<dbReference type="InterPro" id="IPR029063">
    <property type="entry name" value="SAM-dependent_MTases_sf"/>
</dbReference>
<dbReference type="InterPro" id="IPR010233">
    <property type="entry name" value="UbiG_MeTrfase"/>
</dbReference>
<dbReference type="NCBIfam" id="TIGR01983">
    <property type="entry name" value="UbiG"/>
    <property type="match status" value="1"/>
</dbReference>
<dbReference type="PANTHER" id="PTHR43464">
    <property type="entry name" value="METHYLTRANSFERASE"/>
    <property type="match status" value="1"/>
</dbReference>
<dbReference type="PANTHER" id="PTHR43464:SF19">
    <property type="entry name" value="UBIQUINONE BIOSYNTHESIS O-METHYLTRANSFERASE, MITOCHONDRIAL"/>
    <property type="match status" value="1"/>
</dbReference>
<dbReference type="Pfam" id="PF13489">
    <property type="entry name" value="Methyltransf_23"/>
    <property type="match status" value="1"/>
</dbReference>
<dbReference type="SUPFAM" id="SSF53335">
    <property type="entry name" value="S-adenosyl-L-methionine-dependent methyltransferases"/>
    <property type="match status" value="1"/>
</dbReference>